<evidence type="ECO:0000255" key="1">
    <source>
        <dbReference type="HAMAP-Rule" id="MF_00558"/>
    </source>
</evidence>
<accession>Q98EC5</accession>
<comment type="function">
    <text evidence="1">Succinyl-CoA synthetase functions in the citric acid cycle (TCA), coupling the hydrolysis of succinyl-CoA to the synthesis of either ATP or GTP and thus represents the only step of substrate-level phosphorylation in the TCA. The beta subunit provides nucleotide specificity of the enzyme and binds the substrate succinate, while the binding sites for coenzyme A and phosphate are found in the alpha subunit.</text>
</comment>
<comment type="catalytic activity">
    <reaction evidence="1">
        <text>succinate + ATP + CoA = succinyl-CoA + ADP + phosphate</text>
        <dbReference type="Rhea" id="RHEA:17661"/>
        <dbReference type="ChEBI" id="CHEBI:30031"/>
        <dbReference type="ChEBI" id="CHEBI:30616"/>
        <dbReference type="ChEBI" id="CHEBI:43474"/>
        <dbReference type="ChEBI" id="CHEBI:57287"/>
        <dbReference type="ChEBI" id="CHEBI:57292"/>
        <dbReference type="ChEBI" id="CHEBI:456216"/>
        <dbReference type="EC" id="6.2.1.5"/>
    </reaction>
    <physiologicalReaction direction="right-to-left" evidence="1">
        <dbReference type="Rhea" id="RHEA:17663"/>
    </physiologicalReaction>
</comment>
<comment type="catalytic activity">
    <reaction evidence="1">
        <text>GTP + succinate + CoA = succinyl-CoA + GDP + phosphate</text>
        <dbReference type="Rhea" id="RHEA:22120"/>
        <dbReference type="ChEBI" id="CHEBI:30031"/>
        <dbReference type="ChEBI" id="CHEBI:37565"/>
        <dbReference type="ChEBI" id="CHEBI:43474"/>
        <dbReference type="ChEBI" id="CHEBI:57287"/>
        <dbReference type="ChEBI" id="CHEBI:57292"/>
        <dbReference type="ChEBI" id="CHEBI:58189"/>
    </reaction>
    <physiologicalReaction direction="right-to-left" evidence="1">
        <dbReference type="Rhea" id="RHEA:22122"/>
    </physiologicalReaction>
</comment>
<comment type="cofactor">
    <cofactor evidence="1">
        <name>Mg(2+)</name>
        <dbReference type="ChEBI" id="CHEBI:18420"/>
    </cofactor>
    <text evidence="1">Binds 1 Mg(2+) ion per subunit.</text>
</comment>
<comment type="pathway">
    <text evidence="1">Carbohydrate metabolism; tricarboxylic acid cycle; succinate from succinyl-CoA (ligase route): step 1/1.</text>
</comment>
<comment type="subunit">
    <text evidence="1">Heterotetramer of two alpha and two beta subunits.</text>
</comment>
<comment type="similarity">
    <text evidence="1">Belongs to the succinate/malate CoA ligase beta subunit family.</text>
</comment>
<sequence>MNIHEYQGKALLKSFGAPVAEGVPVFKASEAEAAARALPGPLYVVKSQIHAGGRGKGKFKELSPDAKGGVRLAKSVADVVANANEMLGHTLVTKQTGPAGKQVNRLYIEDGADIERELYLSILVDRSVGRIAFVVSTEGGMDIEAVAHDTPEKVITVAIDPERGVTADDVKKLNAALKLDGDAAKDGGTLFPILYKAFIEKDMSLLEVNPLIVMKNGRLRVLDAKVSFDNNALFRHPDVLELRDTTEEDEKEIEASKYDLAYVALDGNIGCMVNGAGLAMATMDIIKLYGAEPANFLDVGGGASKEKVTAAFKIITKDPAVKGILINIFGGIMKCDIIAEGVIAAVKEVGLEVPLVVRLEGTNAELGKKIINDSGLNVVSADDLDDAAKKIVAAVKG</sequence>
<proteinExistence type="inferred from homology"/>
<gene>
    <name evidence="1" type="primary">sucC</name>
    <name type="ordered locus">mll4306</name>
</gene>
<dbReference type="EC" id="6.2.1.5" evidence="1"/>
<dbReference type="EMBL" id="BA000012">
    <property type="protein sequence ID" value="BAB50995.1"/>
    <property type="molecule type" value="Genomic_DNA"/>
</dbReference>
<dbReference type="RefSeq" id="WP_010912337.1">
    <property type="nucleotide sequence ID" value="NC_002678.2"/>
</dbReference>
<dbReference type="SMR" id="Q98EC5"/>
<dbReference type="KEGG" id="mlo:mll4306"/>
<dbReference type="PATRIC" id="fig|266835.9.peg.3399"/>
<dbReference type="eggNOG" id="COG0045">
    <property type="taxonomic scope" value="Bacteria"/>
</dbReference>
<dbReference type="HOGENOM" id="CLU_037430_0_2_5"/>
<dbReference type="UniPathway" id="UPA00223">
    <property type="reaction ID" value="UER00999"/>
</dbReference>
<dbReference type="Proteomes" id="UP000000552">
    <property type="component" value="Chromosome"/>
</dbReference>
<dbReference type="GO" id="GO:0005829">
    <property type="term" value="C:cytosol"/>
    <property type="evidence" value="ECO:0007669"/>
    <property type="project" value="TreeGrafter"/>
</dbReference>
<dbReference type="GO" id="GO:0042709">
    <property type="term" value="C:succinate-CoA ligase complex"/>
    <property type="evidence" value="ECO:0007669"/>
    <property type="project" value="TreeGrafter"/>
</dbReference>
<dbReference type="GO" id="GO:0005524">
    <property type="term" value="F:ATP binding"/>
    <property type="evidence" value="ECO:0007669"/>
    <property type="project" value="UniProtKB-UniRule"/>
</dbReference>
<dbReference type="GO" id="GO:0000287">
    <property type="term" value="F:magnesium ion binding"/>
    <property type="evidence" value="ECO:0007669"/>
    <property type="project" value="UniProtKB-UniRule"/>
</dbReference>
<dbReference type="GO" id="GO:0004775">
    <property type="term" value="F:succinate-CoA ligase (ADP-forming) activity"/>
    <property type="evidence" value="ECO:0007669"/>
    <property type="project" value="UniProtKB-UniRule"/>
</dbReference>
<dbReference type="GO" id="GO:0004776">
    <property type="term" value="F:succinate-CoA ligase (GDP-forming) activity"/>
    <property type="evidence" value="ECO:0007669"/>
    <property type="project" value="RHEA"/>
</dbReference>
<dbReference type="GO" id="GO:0006104">
    <property type="term" value="P:succinyl-CoA metabolic process"/>
    <property type="evidence" value="ECO:0007669"/>
    <property type="project" value="TreeGrafter"/>
</dbReference>
<dbReference type="GO" id="GO:0006099">
    <property type="term" value="P:tricarboxylic acid cycle"/>
    <property type="evidence" value="ECO:0007669"/>
    <property type="project" value="UniProtKB-UniRule"/>
</dbReference>
<dbReference type="FunFam" id="3.30.1490.20:FF:000002">
    <property type="entry name" value="Succinate--CoA ligase [ADP-forming] subunit beta"/>
    <property type="match status" value="1"/>
</dbReference>
<dbReference type="FunFam" id="3.30.470.20:FF:000002">
    <property type="entry name" value="Succinate--CoA ligase [ADP-forming] subunit beta"/>
    <property type="match status" value="1"/>
</dbReference>
<dbReference type="FunFam" id="3.40.50.261:FF:000001">
    <property type="entry name" value="Succinate--CoA ligase [ADP-forming] subunit beta"/>
    <property type="match status" value="1"/>
</dbReference>
<dbReference type="Gene3D" id="3.30.1490.20">
    <property type="entry name" value="ATP-grasp fold, A domain"/>
    <property type="match status" value="1"/>
</dbReference>
<dbReference type="Gene3D" id="3.30.470.20">
    <property type="entry name" value="ATP-grasp fold, B domain"/>
    <property type="match status" value="1"/>
</dbReference>
<dbReference type="Gene3D" id="3.40.50.261">
    <property type="entry name" value="Succinyl-CoA synthetase domains"/>
    <property type="match status" value="1"/>
</dbReference>
<dbReference type="HAMAP" id="MF_00558">
    <property type="entry name" value="Succ_CoA_beta"/>
    <property type="match status" value="1"/>
</dbReference>
<dbReference type="InterPro" id="IPR011761">
    <property type="entry name" value="ATP-grasp"/>
</dbReference>
<dbReference type="InterPro" id="IPR013650">
    <property type="entry name" value="ATP-grasp_succ-CoA_synth-type"/>
</dbReference>
<dbReference type="InterPro" id="IPR013815">
    <property type="entry name" value="ATP_grasp_subdomain_1"/>
</dbReference>
<dbReference type="InterPro" id="IPR017866">
    <property type="entry name" value="Succ-CoA_synthase_bsu_CS"/>
</dbReference>
<dbReference type="InterPro" id="IPR005811">
    <property type="entry name" value="SUCC_ACL_C"/>
</dbReference>
<dbReference type="InterPro" id="IPR005809">
    <property type="entry name" value="Succ_CoA_ligase-like_bsu"/>
</dbReference>
<dbReference type="InterPro" id="IPR016102">
    <property type="entry name" value="Succinyl-CoA_synth-like"/>
</dbReference>
<dbReference type="NCBIfam" id="NF001913">
    <property type="entry name" value="PRK00696.1"/>
    <property type="match status" value="1"/>
</dbReference>
<dbReference type="NCBIfam" id="TIGR01016">
    <property type="entry name" value="sucCoAbeta"/>
    <property type="match status" value="1"/>
</dbReference>
<dbReference type="PANTHER" id="PTHR11815:SF10">
    <property type="entry name" value="SUCCINATE--COA LIGASE [GDP-FORMING] SUBUNIT BETA, MITOCHONDRIAL"/>
    <property type="match status" value="1"/>
</dbReference>
<dbReference type="PANTHER" id="PTHR11815">
    <property type="entry name" value="SUCCINYL-COA SYNTHETASE BETA CHAIN"/>
    <property type="match status" value="1"/>
</dbReference>
<dbReference type="Pfam" id="PF08442">
    <property type="entry name" value="ATP-grasp_2"/>
    <property type="match status" value="1"/>
</dbReference>
<dbReference type="Pfam" id="PF00549">
    <property type="entry name" value="Ligase_CoA"/>
    <property type="match status" value="1"/>
</dbReference>
<dbReference type="PIRSF" id="PIRSF001554">
    <property type="entry name" value="SucCS_beta"/>
    <property type="match status" value="1"/>
</dbReference>
<dbReference type="SUPFAM" id="SSF56059">
    <property type="entry name" value="Glutathione synthetase ATP-binding domain-like"/>
    <property type="match status" value="1"/>
</dbReference>
<dbReference type="SUPFAM" id="SSF52210">
    <property type="entry name" value="Succinyl-CoA synthetase domains"/>
    <property type="match status" value="1"/>
</dbReference>
<dbReference type="PROSITE" id="PS50975">
    <property type="entry name" value="ATP_GRASP"/>
    <property type="match status" value="1"/>
</dbReference>
<dbReference type="PROSITE" id="PS01217">
    <property type="entry name" value="SUCCINYL_COA_LIG_3"/>
    <property type="match status" value="1"/>
</dbReference>
<protein>
    <recommendedName>
        <fullName evidence="1">Succinate--CoA ligase [ADP-forming] subunit beta</fullName>
        <ecNumber evidence="1">6.2.1.5</ecNumber>
    </recommendedName>
    <alternativeName>
        <fullName evidence="1">Succinyl-CoA synthetase subunit beta</fullName>
        <shortName evidence="1">SCS-beta</shortName>
    </alternativeName>
</protein>
<keyword id="KW-0067">ATP-binding</keyword>
<keyword id="KW-0436">Ligase</keyword>
<keyword id="KW-0460">Magnesium</keyword>
<keyword id="KW-0479">Metal-binding</keyword>
<keyword id="KW-0547">Nucleotide-binding</keyword>
<keyword id="KW-0816">Tricarboxylic acid cycle</keyword>
<reference key="1">
    <citation type="journal article" date="2000" name="DNA Res.">
        <title>Complete genome structure of the nitrogen-fixing symbiotic bacterium Mesorhizobium loti.</title>
        <authorList>
            <person name="Kaneko T."/>
            <person name="Nakamura Y."/>
            <person name="Sato S."/>
            <person name="Asamizu E."/>
            <person name="Kato T."/>
            <person name="Sasamoto S."/>
            <person name="Watanabe A."/>
            <person name="Idesawa K."/>
            <person name="Ishikawa A."/>
            <person name="Kawashima K."/>
            <person name="Kimura T."/>
            <person name="Kishida Y."/>
            <person name="Kiyokawa C."/>
            <person name="Kohara M."/>
            <person name="Matsumoto M."/>
            <person name="Matsuno A."/>
            <person name="Mochizuki Y."/>
            <person name="Nakayama S."/>
            <person name="Nakazaki N."/>
            <person name="Shimpo S."/>
            <person name="Sugimoto M."/>
            <person name="Takeuchi C."/>
            <person name="Yamada M."/>
            <person name="Tabata S."/>
        </authorList>
    </citation>
    <scope>NUCLEOTIDE SEQUENCE [LARGE SCALE GENOMIC DNA]</scope>
    <source>
        <strain>LMG 29417 / CECT 9101 / MAFF 303099</strain>
    </source>
</reference>
<organism>
    <name type="scientific">Mesorhizobium japonicum (strain LMG 29417 / CECT 9101 / MAFF 303099)</name>
    <name type="common">Mesorhizobium loti (strain MAFF 303099)</name>
    <dbReference type="NCBI Taxonomy" id="266835"/>
    <lineage>
        <taxon>Bacteria</taxon>
        <taxon>Pseudomonadati</taxon>
        <taxon>Pseudomonadota</taxon>
        <taxon>Alphaproteobacteria</taxon>
        <taxon>Hyphomicrobiales</taxon>
        <taxon>Phyllobacteriaceae</taxon>
        <taxon>Mesorhizobium</taxon>
    </lineage>
</organism>
<name>SUCC_RHILO</name>
<feature type="chain" id="PRO_0000102846" description="Succinate--CoA ligase [ADP-forming] subunit beta">
    <location>
        <begin position="1"/>
        <end position="397"/>
    </location>
</feature>
<feature type="domain" description="ATP-grasp" evidence="1">
    <location>
        <begin position="9"/>
        <end position="254"/>
    </location>
</feature>
<feature type="binding site" evidence="1">
    <location>
        <position position="46"/>
    </location>
    <ligand>
        <name>ATP</name>
        <dbReference type="ChEBI" id="CHEBI:30616"/>
    </ligand>
</feature>
<feature type="binding site" evidence="1">
    <location>
        <begin position="53"/>
        <end position="55"/>
    </location>
    <ligand>
        <name>ATP</name>
        <dbReference type="ChEBI" id="CHEBI:30616"/>
    </ligand>
</feature>
<feature type="binding site" evidence="1">
    <location>
        <position position="109"/>
    </location>
    <ligand>
        <name>ATP</name>
        <dbReference type="ChEBI" id="CHEBI:30616"/>
    </ligand>
</feature>
<feature type="binding site" evidence="1">
    <location>
        <position position="112"/>
    </location>
    <ligand>
        <name>ATP</name>
        <dbReference type="ChEBI" id="CHEBI:30616"/>
    </ligand>
</feature>
<feature type="binding site" evidence="1">
    <location>
        <position position="117"/>
    </location>
    <ligand>
        <name>ATP</name>
        <dbReference type="ChEBI" id="CHEBI:30616"/>
    </ligand>
</feature>
<feature type="binding site" evidence="1">
    <location>
        <position position="209"/>
    </location>
    <ligand>
        <name>Mg(2+)</name>
        <dbReference type="ChEBI" id="CHEBI:18420"/>
    </ligand>
</feature>
<feature type="binding site" evidence="1">
    <location>
        <position position="223"/>
    </location>
    <ligand>
        <name>Mg(2+)</name>
        <dbReference type="ChEBI" id="CHEBI:18420"/>
    </ligand>
</feature>
<feature type="binding site" evidence="1">
    <location>
        <position position="274"/>
    </location>
    <ligand>
        <name>substrate</name>
        <note>ligand shared with subunit alpha</note>
    </ligand>
</feature>
<feature type="binding site" evidence="1">
    <location>
        <begin position="331"/>
        <end position="333"/>
    </location>
    <ligand>
        <name>substrate</name>
        <note>ligand shared with subunit alpha</note>
    </ligand>
</feature>